<protein>
    <recommendedName>
        <fullName evidence="1">Uracil-DNA glycosylase</fullName>
        <shortName evidence="1">UDG</shortName>
        <ecNumber evidence="1">3.2.2.27</ecNumber>
    </recommendedName>
    <alternativeName>
        <fullName evidence="1">UNG</fullName>
    </alternativeName>
</protein>
<gene>
    <name type="primary">61</name>
</gene>
<organism>
    <name type="scientific">Equine herpesvirus 1 (strain V592)</name>
    <name type="common">EHV-1</name>
    <name type="synonym">Equine abortion virus</name>
    <dbReference type="NCBI Taxonomy" id="310273"/>
    <lineage>
        <taxon>Viruses</taxon>
        <taxon>Duplodnaviria</taxon>
        <taxon>Heunggongvirae</taxon>
        <taxon>Peploviricota</taxon>
        <taxon>Herviviricetes</taxon>
        <taxon>Herpesvirales</taxon>
        <taxon>Orthoherpesviridae</taxon>
        <taxon>Alphaherpesvirinae</taxon>
        <taxon>Varicellovirus</taxon>
        <taxon>Varicellovirus equidalpha1</taxon>
        <taxon>Equid alphaherpesvirus 1</taxon>
    </lineage>
</organism>
<sequence length="312" mass="34778">MSSACDHETEASHVNIPETTPEENGSNSSTPTSEIGPACVVSPAPGETGAPPPKRRRPCGLPQGVALINTSVSTHPLFTTSCQSSWEDVEREFNIAPSWRPILEREMQQPYVRLLLNEYKLRCASEEVFPPKEDIFAWTRFSPPEKVRVVIVGQDPYHAPGQAHGLAFSVRKGVPVPPSLRNIYSAVQKSYPSFRHPMHGFLERWAEQGVLLINTTLTVARGKPGSHATLGWHRLVRAVIDRLCTTSQGLVFMLWGAHAQKSCSPNRQHHLVLTYGHPSPLSRVNFRDCPHFLEANAYLTKTGRKPVDWQIE</sequence>
<evidence type="ECO:0000255" key="1">
    <source>
        <dbReference type="HAMAP-Rule" id="MF_04046"/>
    </source>
</evidence>
<evidence type="ECO:0000256" key="2">
    <source>
        <dbReference type="SAM" id="MobiDB-lite"/>
    </source>
</evidence>
<keyword id="KW-0227">DNA damage</keyword>
<keyword id="KW-0234">DNA repair</keyword>
<keyword id="KW-1048">Host nucleus</keyword>
<keyword id="KW-0378">Hydrolase</keyword>
<organismHost>
    <name type="scientific">Equus caballus</name>
    <name type="common">Horse</name>
    <dbReference type="NCBI Taxonomy" id="9796"/>
</organismHost>
<accession>P69859</accession>
<accession>Q6S6U3</accession>
<feature type="chain" id="PRO_0000176194" description="Uracil-DNA glycosylase">
    <location>
        <begin position="1"/>
        <end position="312"/>
    </location>
</feature>
<feature type="region of interest" description="Disordered" evidence="2">
    <location>
        <begin position="1"/>
        <end position="61"/>
    </location>
</feature>
<feature type="compositionally biased region" description="Basic and acidic residues" evidence="2">
    <location>
        <begin position="1"/>
        <end position="11"/>
    </location>
</feature>
<feature type="compositionally biased region" description="Polar residues" evidence="2">
    <location>
        <begin position="22"/>
        <end position="33"/>
    </location>
</feature>
<feature type="active site" description="Proton acceptor" evidence="1">
    <location>
        <position position="155"/>
    </location>
</feature>
<dbReference type="EC" id="3.2.2.27" evidence="1"/>
<dbReference type="EMBL" id="AY464052">
    <property type="protein sequence ID" value="AAS45945.1"/>
    <property type="molecule type" value="Genomic_DNA"/>
</dbReference>
<dbReference type="SMR" id="P69859"/>
<dbReference type="KEGG" id="vg:2948563"/>
<dbReference type="Proteomes" id="UP000008296">
    <property type="component" value="Segment"/>
</dbReference>
<dbReference type="GO" id="GO:0042025">
    <property type="term" value="C:host cell nucleus"/>
    <property type="evidence" value="ECO:0007669"/>
    <property type="project" value="UniProtKB-SubCell"/>
</dbReference>
<dbReference type="GO" id="GO:0004844">
    <property type="term" value="F:uracil DNA N-glycosylase activity"/>
    <property type="evidence" value="ECO:0007669"/>
    <property type="project" value="UniProtKB-EC"/>
</dbReference>
<dbReference type="GO" id="GO:0097510">
    <property type="term" value="P:base-excision repair, AP site formation via deaminated base removal"/>
    <property type="evidence" value="ECO:0007669"/>
    <property type="project" value="TreeGrafter"/>
</dbReference>
<dbReference type="CDD" id="cd10027">
    <property type="entry name" value="UDG-F1-like"/>
    <property type="match status" value="1"/>
</dbReference>
<dbReference type="Gene3D" id="3.40.470.10">
    <property type="entry name" value="Uracil-DNA glycosylase-like domain"/>
    <property type="match status" value="1"/>
</dbReference>
<dbReference type="HAMAP" id="MF_00148">
    <property type="entry name" value="UDG"/>
    <property type="match status" value="1"/>
</dbReference>
<dbReference type="InterPro" id="IPR002043">
    <property type="entry name" value="UDG_fam1"/>
</dbReference>
<dbReference type="InterPro" id="IPR018085">
    <property type="entry name" value="Ura-DNA_Glyclase_AS"/>
</dbReference>
<dbReference type="InterPro" id="IPR005122">
    <property type="entry name" value="Uracil-DNA_glycosylase-like"/>
</dbReference>
<dbReference type="InterPro" id="IPR036895">
    <property type="entry name" value="Uracil-DNA_glycosylase-like_sf"/>
</dbReference>
<dbReference type="NCBIfam" id="NF003588">
    <property type="entry name" value="PRK05254.1-1"/>
    <property type="match status" value="1"/>
</dbReference>
<dbReference type="NCBIfam" id="NF003589">
    <property type="entry name" value="PRK05254.1-2"/>
    <property type="match status" value="1"/>
</dbReference>
<dbReference type="NCBIfam" id="NF003592">
    <property type="entry name" value="PRK05254.1-5"/>
    <property type="match status" value="1"/>
</dbReference>
<dbReference type="NCBIfam" id="TIGR00628">
    <property type="entry name" value="ung"/>
    <property type="match status" value="1"/>
</dbReference>
<dbReference type="PANTHER" id="PTHR11264">
    <property type="entry name" value="URACIL-DNA GLYCOSYLASE"/>
    <property type="match status" value="1"/>
</dbReference>
<dbReference type="PANTHER" id="PTHR11264:SF0">
    <property type="entry name" value="URACIL-DNA GLYCOSYLASE"/>
    <property type="match status" value="1"/>
</dbReference>
<dbReference type="Pfam" id="PF03167">
    <property type="entry name" value="UDG"/>
    <property type="match status" value="1"/>
</dbReference>
<dbReference type="SMART" id="SM00986">
    <property type="entry name" value="UDG"/>
    <property type="match status" value="1"/>
</dbReference>
<dbReference type="SMART" id="SM00987">
    <property type="entry name" value="UreE_C"/>
    <property type="match status" value="1"/>
</dbReference>
<dbReference type="SUPFAM" id="SSF52141">
    <property type="entry name" value="Uracil-DNA glycosylase-like"/>
    <property type="match status" value="1"/>
</dbReference>
<dbReference type="PROSITE" id="PS00130">
    <property type="entry name" value="U_DNA_GLYCOSYLASE"/>
    <property type="match status" value="1"/>
</dbReference>
<reference key="1">
    <citation type="submission" date="2003-11" db="EMBL/GenBank/DDBJ databases">
        <authorList>
            <person name="Davis-Poynter N.J."/>
            <person name="Nugent J."/>
            <person name="Birch-Machin I."/>
            <person name="Allen G.P."/>
        </authorList>
    </citation>
    <scope>NUCLEOTIDE SEQUENCE [GENOMIC DNA]</scope>
</reference>
<proteinExistence type="inferred from homology"/>
<comment type="function">
    <text evidence="1">Excises uracil residues from the DNA which can arise as a result of misincorporation of dUMP residues by DNA polymerase or deamination of cytosines. Therefore may reduce deleterious uracil incorporation into the viral genome, particularly in terminally differentiated cells which lack DNA repair enzymes.</text>
</comment>
<comment type="catalytic activity">
    <reaction evidence="1">
        <text>Hydrolyzes single-stranded DNA or mismatched double-stranded DNA and polynucleotides, releasing free uracil.</text>
        <dbReference type="EC" id="3.2.2.27"/>
    </reaction>
</comment>
<comment type="subcellular location">
    <subcellularLocation>
        <location evidence="1">Host nucleus</location>
    </subcellularLocation>
</comment>
<comment type="similarity">
    <text evidence="1">Belongs to the uracil-DNA glycosylase (UDG) superfamily. UNG family.</text>
</comment>
<name>UNG_EHV1V</name>